<proteinExistence type="inferred from homology"/>
<accession>O21543</accession>
<protein>
    <recommendedName>
        <fullName evidence="1">NADH-ubiquinone oxidoreductase chain 3</fullName>
        <ecNumber evidence="1">7.1.1.2</ecNumber>
    </recommendedName>
    <alternativeName>
        <fullName>NADH dehydrogenase subunit 3</fullName>
    </alternativeName>
</protein>
<dbReference type="EC" id="7.1.1.2" evidence="1"/>
<dbReference type="EMBL" id="U83814">
    <property type="protein sequence ID" value="AAB87190.1"/>
    <property type="molecule type" value="Genomic_DNA"/>
</dbReference>
<dbReference type="SMR" id="O21543"/>
<dbReference type="GO" id="GO:0005743">
    <property type="term" value="C:mitochondrial inner membrane"/>
    <property type="evidence" value="ECO:0000250"/>
    <property type="project" value="UniProtKB"/>
</dbReference>
<dbReference type="GO" id="GO:0030964">
    <property type="term" value="C:NADH dehydrogenase complex"/>
    <property type="evidence" value="ECO:0007669"/>
    <property type="project" value="TreeGrafter"/>
</dbReference>
<dbReference type="GO" id="GO:0008137">
    <property type="term" value="F:NADH dehydrogenase (ubiquinone) activity"/>
    <property type="evidence" value="ECO:0000250"/>
    <property type="project" value="UniProtKB"/>
</dbReference>
<dbReference type="GO" id="GO:0006120">
    <property type="term" value="P:mitochondrial electron transport, NADH to ubiquinone"/>
    <property type="evidence" value="ECO:0000250"/>
    <property type="project" value="UniProtKB"/>
</dbReference>
<dbReference type="FunFam" id="1.20.58.1610:FF:000004">
    <property type="entry name" value="NADH-quinone oxidoreductase subunit A"/>
    <property type="match status" value="1"/>
</dbReference>
<dbReference type="Gene3D" id="1.20.58.1610">
    <property type="entry name" value="NADH:ubiquinone/plastoquinone oxidoreductase, chain 3"/>
    <property type="match status" value="1"/>
</dbReference>
<dbReference type="InterPro" id="IPR000440">
    <property type="entry name" value="NADH_UbQ/plastoQ_OxRdtase_su3"/>
</dbReference>
<dbReference type="InterPro" id="IPR038430">
    <property type="entry name" value="NDAH_ubi_oxred_su3_sf"/>
</dbReference>
<dbReference type="PANTHER" id="PTHR11058">
    <property type="entry name" value="NADH-UBIQUINONE OXIDOREDUCTASE CHAIN 3"/>
    <property type="match status" value="1"/>
</dbReference>
<dbReference type="PANTHER" id="PTHR11058:SF9">
    <property type="entry name" value="NADH-UBIQUINONE OXIDOREDUCTASE CHAIN 3"/>
    <property type="match status" value="1"/>
</dbReference>
<dbReference type="Pfam" id="PF00507">
    <property type="entry name" value="Oxidored_q4"/>
    <property type="match status" value="1"/>
</dbReference>
<gene>
    <name evidence="1" type="primary">MT-ND3</name>
    <name type="synonym">MTND3</name>
    <name type="synonym">NADH3</name>
    <name type="synonym">ND3</name>
</gene>
<reference key="1">
    <citation type="journal article" date="1998" name="Mol. Biol. Evol.">
        <title>Molecular systematics and paleobiogeography of the South American sigmodontine rodents.</title>
        <authorList>
            <person name="Engel S.R."/>
            <person name="Hogan K.M."/>
            <person name="Taylor J.F."/>
            <person name="Davis S.K."/>
        </authorList>
    </citation>
    <scope>NUCLEOTIDE SEQUENCE [GENOMIC DNA]</scope>
</reference>
<organism>
    <name type="scientific">Notiomys edwardsii</name>
    <name type="common">Edwards's long-clawed mouse</name>
    <dbReference type="NCBI Taxonomy" id="29119"/>
    <lineage>
        <taxon>Eukaryota</taxon>
        <taxon>Metazoa</taxon>
        <taxon>Chordata</taxon>
        <taxon>Craniata</taxon>
        <taxon>Vertebrata</taxon>
        <taxon>Euteleostomi</taxon>
        <taxon>Mammalia</taxon>
        <taxon>Eutheria</taxon>
        <taxon>Euarchontoglires</taxon>
        <taxon>Glires</taxon>
        <taxon>Rodentia</taxon>
        <taxon>Myomorpha</taxon>
        <taxon>Muroidea</taxon>
        <taxon>Cricetidae</taxon>
        <taxon>Sigmodontinae</taxon>
        <taxon>Notiomys</taxon>
    </lineage>
</organism>
<name>NU3M_NOTED</name>
<keyword id="KW-0249">Electron transport</keyword>
<keyword id="KW-0472">Membrane</keyword>
<keyword id="KW-0496">Mitochondrion</keyword>
<keyword id="KW-0999">Mitochondrion inner membrane</keyword>
<keyword id="KW-0520">NAD</keyword>
<keyword id="KW-0679">Respiratory chain</keyword>
<keyword id="KW-1278">Translocase</keyword>
<keyword id="KW-0812">Transmembrane</keyword>
<keyword id="KW-1133">Transmembrane helix</keyword>
<keyword id="KW-0813">Transport</keyword>
<keyword id="KW-0830">Ubiquinone</keyword>
<comment type="function">
    <text evidence="1">Core subunit of the mitochondrial membrane respiratory chain NADH dehydrogenase (Complex I) which catalyzes electron transfer from NADH through the respiratory chain, using ubiquinone as an electron acceptor. Essential for the catalytic activity of complex I.</text>
</comment>
<comment type="catalytic activity">
    <reaction evidence="1">
        <text>a ubiquinone + NADH + 5 H(+)(in) = a ubiquinol + NAD(+) + 4 H(+)(out)</text>
        <dbReference type="Rhea" id="RHEA:29091"/>
        <dbReference type="Rhea" id="RHEA-COMP:9565"/>
        <dbReference type="Rhea" id="RHEA-COMP:9566"/>
        <dbReference type="ChEBI" id="CHEBI:15378"/>
        <dbReference type="ChEBI" id="CHEBI:16389"/>
        <dbReference type="ChEBI" id="CHEBI:17976"/>
        <dbReference type="ChEBI" id="CHEBI:57540"/>
        <dbReference type="ChEBI" id="CHEBI:57945"/>
        <dbReference type="EC" id="7.1.1.2"/>
    </reaction>
</comment>
<comment type="subunit">
    <text evidence="1">Core subunit of respiratory chain NADH dehydrogenase (Complex I) which is composed of 45 different subunits. Interacts with TMEM186. Interacts with TMEM242 (By similarity).</text>
</comment>
<comment type="subcellular location">
    <subcellularLocation>
        <location evidence="2">Mitochondrion inner membrane</location>
        <topology evidence="3">Multi-pass membrane protein</topology>
    </subcellularLocation>
</comment>
<comment type="similarity">
    <text evidence="4">Belongs to the complex I subunit 3 family.</text>
</comment>
<geneLocation type="mitochondrion"/>
<sequence>MNMLITMTVNSALSFCLISIAFWLPHLNIYTEKASPYECGFDPMSSARLPFSLKFFLVGITFLLFDLEIALLLPLPWAMHSPNTTTTMMVSFMFVSILALGLAYEWLNKGLEWTE</sequence>
<evidence type="ECO:0000250" key="1">
    <source>
        <dbReference type="UniProtKB" id="P03897"/>
    </source>
</evidence>
<evidence type="ECO:0000250" key="2">
    <source>
        <dbReference type="UniProtKB" id="P03898"/>
    </source>
</evidence>
<evidence type="ECO:0000255" key="3"/>
<evidence type="ECO:0000305" key="4"/>
<feature type="chain" id="PRO_0000117772" description="NADH-ubiquinone oxidoreductase chain 3">
    <location>
        <begin position="1"/>
        <end position="115"/>
    </location>
</feature>
<feature type="transmembrane region" description="Helical" evidence="3">
    <location>
        <begin position="4"/>
        <end position="24"/>
    </location>
</feature>
<feature type="transmembrane region" description="Helical" evidence="3">
    <location>
        <begin position="55"/>
        <end position="75"/>
    </location>
</feature>
<feature type="transmembrane region" description="Helical" evidence="3">
    <location>
        <begin position="87"/>
        <end position="107"/>
    </location>
</feature>